<gene>
    <name evidence="1" type="primary">nagB</name>
    <name type="ordered locus">VIBHAR_07002</name>
</gene>
<feature type="chain" id="PRO_1000067035" description="Glucosamine-6-phosphate deaminase">
    <location>
        <begin position="1"/>
        <end position="266"/>
    </location>
</feature>
<feature type="active site" description="Proton acceptor; for enolization step" evidence="1">
    <location>
        <position position="72"/>
    </location>
</feature>
<feature type="active site" description="For ring-opening step" evidence="1">
    <location>
        <position position="141"/>
    </location>
</feature>
<feature type="active site" description="Proton acceptor; for ring-opening step" evidence="1">
    <location>
        <position position="143"/>
    </location>
</feature>
<feature type="active site" description="For ring-opening step" evidence="1">
    <location>
        <position position="148"/>
    </location>
</feature>
<feature type="site" description="Part of the allosteric site" evidence="1">
    <location>
        <position position="151"/>
    </location>
</feature>
<feature type="site" description="Part of the allosteric site" evidence="1">
    <location>
        <position position="158"/>
    </location>
</feature>
<feature type="site" description="Part of the allosteric site" evidence="1">
    <location>
        <position position="160"/>
    </location>
</feature>
<feature type="site" description="Part of the allosteric site" evidence="1">
    <location>
        <position position="161"/>
    </location>
</feature>
<feature type="site" description="Part of the allosteric site" evidence="1">
    <location>
        <position position="254"/>
    </location>
</feature>
<comment type="function">
    <text evidence="1">Catalyzes the reversible isomerization-deamination of glucosamine 6-phosphate (GlcN6P) to form fructose 6-phosphate (Fru6P) and ammonium ion.</text>
</comment>
<comment type="catalytic activity">
    <reaction evidence="1">
        <text>alpha-D-glucosamine 6-phosphate + H2O = beta-D-fructose 6-phosphate + NH4(+)</text>
        <dbReference type="Rhea" id="RHEA:12172"/>
        <dbReference type="ChEBI" id="CHEBI:15377"/>
        <dbReference type="ChEBI" id="CHEBI:28938"/>
        <dbReference type="ChEBI" id="CHEBI:57634"/>
        <dbReference type="ChEBI" id="CHEBI:75989"/>
        <dbReference type="EC" id="3.5.99.6"/>
    </reaction>
</comment>
<comment type="activity regulation">
    <text evidence="1">Allosterically activated by N-acetylglucosamine 6-phosphate (GlcNAc6P).</text>
</comment>
<comment type="pathway">
    <text evidence="1">Amino-sugar metabolism; N-acetylneuraminate degradation; D-fructose 6-phosphate from N-acetylneuraminate: step 5/5.</text>
</comment>
<comment type="subunit">
    <text evidence="1">Homohexamer.</text>
</comment>
<comment type="similarity">
    <text evidence="1">Belongs to the glucosamine/galactosamine-6-phosphate isomerase family. NagB subfamily.</text>
</comment>
<dbReference type="EC" id="3.5.99.6" evidence="1"/>
<dbReference type="EMBL" id="CP000790">
    <property type="protein sequence ID" value="ABU74876.1"/>
    <property type="molecule type" value="Genomic_DNA"/>
</dbReference>
<dbReference type="RefSeq" id="WP_005531216.1">
    <property type="nucleotide sequence ID" value="NC_009784.1"/>
</dbReference>
<dbReference type="SMR" id="A7N5W3"/>
<dbReference type="GeneID" id="67380533"/>
<dbReference type="KEGG" id="vha:VIBHAR_07002"/>
<dbReference type="PATRIC" id="fig|338187.36.peg.5827"/>
<dbReference type="UniPathway" id="UPA00629">
    <property type="reaction ID" value="UER00684"/>
</dbReference>
<dbReference type="Proteomes" id="UP000008152">
    <property type="component" value="Chromosome II"/>
</dbReference>
<dbReference type="GO" id="GO:0005737">
    <property type="term" value="C:cytoplasm"/>
    <property type="evidence" value="ECO:0007669"/>
    <property type="project" value="TreeGrafter"/>
</dbReference>
<dbReference type="GO" id="GO:0004342">
    <property type="term" value="F:glucosamine-6-phosphate deaminase activity"/>
    <property type="evidence" value="ECO:0007669"/>
    <property type="project" value="UniProtKB-UniRule"/>
</dbReference>
<dbReference type="GO" id="GO:0042802">
    <property type="term" value="F:identical protein binding"/>
    <property type="evidence" value="ECO:0007669"/>
    <property type="project" value="TreeGrafter"/>
</dbReference>
<dbReference type="GO" id="GO:0005975">
    <property type="term" value="P:carbohydrate metabolic process"/>
    <property type="evidence" value="ECO:0007669"/>
    <property type="project" value="InterPro"/>
</dbReference>
<dbReference type="GO" id="GO:0006043">
    <property type="term" value="P:glucosamine catabolic process"/>
    <property type="evidence" value="ECO:0007669"/>
    <property type="project" value="TreeGrafter"/>
</dbReference>
<dbReference type="GO" id="GO:0006046">
    <property type="term" value="P:N-acetylglucosamine catabolic process"/>
    <property type="evidence" value="ECO:0007669"/>
    <property type="project" value="TreeGrafter"/>
</dbReference>
<dbReference type="GO" id="GO:0019262">
    <property type="term" value="P:N-acetylneuraminate catabolic process"/>
    <property type="evidence" value="ECO:0007669"/>
    <property type="project" value="UniProtKB-UniRule"/>
</dbReference>
<dbReference type="CDD" id="cd01399">
    <property type="entry name" value="GlcN6P_deaminase"/>
    <property type="match status" value="1"/>
</dbReference>
<dbReference type="FunFam" id="3.40.50.1360:FF:000002">
    <property type="entry name" value="Glucosamine-6-phosphate deaminase"/>
    <property type="match status" value="1"/>
</dbReference>
<dbReference type="Gene3D" id="3.40.50.1360">
    <property type="match status" value="1"/>
</dbReference>
<dbReference type="HAMAP" id="MF_01241">
    <property type="entry name" value="GlcN6P_deamin"/>
    <property type="match status" value="1"/>
</dbReference>
<dbReference type="InterPro" id="IPR006148">
    <property type="entry name" value="Glc/Gal-6P_isomerase"/>
</dbReference>
<dbReference type="InterPro" id="IPR004547">
    <property type="entry name" value="Glucosamine6P_isomerase"/>
</dbReference>
<dbReference type="InterPro" id="IPR018321">
    <property type="entry name" value="Glucosamine6P_isomerase_CS"/>
</dbReference>
<dbReference type="InterPro" id="IPR037171">
    <property type="entry name" value="NagB/RpiA_transferase-like"/>
</dbReference>
<dbReference type="NCBIfam" id="TIGR00502">
    <property type="entry name" value="nagB"/>
    <property type="match status" value="1"/>
</dbReference>
<dbReference type="NCBIfam" id="NF001685">
    <property type="entry name" value="PRK00443.1-5"/>
    <property type="match status" value="1"/>
</dbReference>
<dbReference type="PANTHER" id="PTHR11280">
    <property type="entry name" value="GLUCOSAMINE-6-PHOSPHATE ISOMERASE"/>
    <property type="match status" value="1"/>
</dbReference>
<dbReference type="PANTHER" id="PTHR11280:SF5">
    <property type="entry name" value="GLUCOSAMINE-6-PHOSPHATE ISOMERASE"/>
    <property type="match status" value="1"/>
</dbReference>
<dbReference type="Pfam" id="PF01182">
    <property type="entry name" value="Glucosamine_iso"/>
    <property type="match status" value="1"/>
</dbReference>
<dbReference type="SUPFAM" id="SSF100950">
    <property type="entry name" value="NagB/RpiA/CoA transferase-like"/>
    <property type="match status" value="1"/>
</dbReference>
<dbReference type="PROSITE" id="PS01161">
    <property type="entry name" value="GLC_GALNAC_ISOMERASE"/>
    <property type="match status" value="1"/>
</dbReference>
<organism>
    <name type="scientific">Vibrio campbellii (strain ATCC BAA-1116)</name>
    <dbReference type="NCBI Taxonomy" id="2902295"/>
    <lineage>
        <taxon>Bacteria</taxon>
        <taxon>Pseudomonadati</taxon>
        <taxon>Pseudomonadota</taxon>
        <taxon>Gammaproteobacteria</taxon>
        <taxon>Vibrionales</taxon>
        <taxon>Vibrionaceae</taxon>
        <taxon>Vibrio</taxon>
    </lineage>
</organism>
<protein>
    <recommendedName>
        <fullName evidence="1">Glucosamine-6-phosphate deaminase</fullName>
        <ecNumber evidence="1">3.5.99.6</ecNumber>
    </recommendedName>
    <alternativeName>
        <fullName evidence="1">GlcN6P deaminase</fullName>
        <shortName evidence="1">GNPDA</shortName>
    </alternativeName>
    <alternativeName>
        <fullName evidence="1">Glucosamine-6-phosphate isomerase</fullName>
    </alternativeName>
</protein>
<proteinExistence type="inferred from homology"/>
<name>NAGB_VIBC1</name>
<sequence>MRLIPLAQAAQVGKWAAAHIAKRINDFKPTAERPFVLGLPTGGTPLATYKALIELYQAGEVSFEHVVTFNMDEYIGIPADHPESYRSFMYTNFFNHVNIQEANINLLNGNAEDHEAECQRYEDKIKSYGKINLFMGGVGNDGHIAFNEPASSLSSRTRIKTLTEDTRIANSRFFDGDINQVPKYALTIGVGTLLDAEEVMILVTGHNKALALEAAVEGSVNHLWTVSALQLHPKAVIVCDEPSQQELKVKTVKYFSELEAENIKGF</sequence>
<accession>A7N5W3</accession>
<evidence type="ECO:0000255" key="1">
    <source>
        <dbReference type="HAMAP-Rule" id="MF_01241"/>
    </source>
</evidence>
<reference key="1">
    <citation type="submission" date="2007-08" db="EMBL/GenBank/DDBJ databases">
        <authorList>
            <consortium name="The Vibrio harveyi Genome Sequencing Project"/>
            <person name="Bassler B."/>
            <person name="Clifton S.W."/>
            <person name="Fulton L."/>
            <person name="Delehaunty K."/>
            <person name="Fronick C."/>
            <person name="Harrison M."/>
            <person name="Markivic C."/>
            <person name="Fulton R."/>
            <person name="Tin-Wollam A.-M."/>
            <person name="Shah N."/>
            <person name="Pepin K."/>
            <person name="Nash W."/>
            <person name="Thiruvilangam P."/>
            <person name="Bhonagiri V."/>
            <person name="Waters C."/>
            <person name="Tu K.C."/>
            <person name="Irgon J."/>
            <person name="Wilson R.K."/>
        </authorList>
    </citation>
    <scope>NUCLEOTIDE SEQUENCE [LARGE SCALE GENOMIC DNA]</scope>
    <source>
        <strain>ATCC BAA-1116 / BB120</strain>
    </source>
</reference>
<keyword id="KW-0021">Allosteric enzyme</keyword>
<keyword id="KW-0119">Carbohydrate metabolism</keyword>
<keyword id="KW-0378">Hydrolase</keyword>